<comment type="function">
    <text evidence="1">RNA-binding protein that plays a role in the inhibition of multiple cellular antiviral responses activated by double-stranded RNA (dsRNA), such as inhibition of PKR activation, necroptosis, and IFN-mediated antiviral activities. Recognizes and binds Z-RNA structures via its Z-binding domain and dsRNA via its DRBM domain: RNA-binding activity is required to escape host ZBP1-dependent necroptosis. Mechanistically, the Z-binding domain binds Z-RNAs that are produced during vaccinia virus infection, thereby competing with Z-RNA detection by host ZBP1, suppressing ZBP1-dependent necroptosis. Acts as a key inhibitor of the interferon response by blocking the phosphorylation and subsequent activation of IRF3 and IRF7 kinases that are required for interferon-alpha gene expression. Inhibits NF-kappa-B activation and the ubiquitin-like protein ISG15, which is an early antiviral protein. The binding with host ISG15 subsequently blocks host ISGylation.</text>
</comment>
<comment type="subunit">
    <text evidence="1">Interacts with host G1P2/ISG15. Interacts with host EIF2AK2/PKR. Interacts with host ZBP1.</text>
</comment>
<comment type="alternative products">
    <event type="alternative initiation"/>
    <isoform>
        <id>P21081-1</id>
        <name>Long</name>
        <sequence type="displayed"/>
    </isoform>
    <isoform>
        <id>P21081-2</id>
        <name>Short</name>
        <sequence type="described" ref="VSP_018956"/>
    </isoform>
</comment>
<comment type="developmental stage">
    <text evidence="4">Detected at early times, by 2 hours post infection, peaks at 5 hours post infection, and decreases during the late phase of virus replication.</text>
</comment>
<comment type="domain">
    <text evidence="1">Contains a dsRNA binding domain (DRBM) and a Z-RNA binding domain. The Z-binding domain recognizes and binds Z-RNA structures.</text>
</comment>
<comment type="similarity">
    <text evidence="6">Belongs to the orthopoxvirus OPG065 family.</text>
</comment>
<reference key="1">
    <citation type="journal article" date="1990" name="Virology">
        <title>The complete DNA sequence of vaccinia virus.</title>
        <authorList>
            <person name="Goebel S.J."/>
            <person name="Johnson G.P."/>
            <person name="Perkus M.E."/>
            <person name="Davis S.W."/>
            <person name="Winslow J.P."/>
            <person name="Paoletti E."/>
        </authorList>
    </citation>
    <scope>NUCLEOTIDE SEQUENCE [LARGE SCALE GENOMIC DNA]</scope>
</reference>
<reference key="2">
    <citation type="journal article" date="1990" name="Virology">
        <title>Appendix to 'The complete DNA sequence of vaccinia virus'.</title>
        <authorList>
            <person name="Goebel S.J."/>
            <person name="Johnson G.P."/>
            <person name="Perkus M.E."/>
            <person name="Davis S.W."/>
            <person name="Winslow J.P."/>
            <person name="Paoletti E."/>
        </authorList>
    </citation>
    <scope>NUCLEOTIDE SEQUENCE [LARGE SCALE GENOMIC DNA]</scope>
</reference>
<reference key="3">
    <citation type="journal article" date="2001" name="J. Biol. Chem.">
        <title>IRF3 and IRF7 phosphorylation in virus-infected cells does not require double-stranded RNA-dependent protein kinase R or Ikappa B kinase but is blocked by Vaccinia virus E3L protein.</title>
        <authorList>
            <person name="Smith E.J."/>
            <person name="Marie I.J."/>
            <person name="Prakash A."/>
            <person name="Garcia-Sastre A."/>
            <person name="Levy D.E."/>
        </authorList>
    </citation>
    <scope>FUNCTION</scope>
    <scope>DEVELOPMENTAL STAGE</scope>
</reference>
<reference key="4">
    <citation type="journal article" date="2004" name="Virology">
        <title>Inhibition of PKR by vaccinia virus: role of the N- and C-terminal domains of E3L.</title>
        <authorList>
            <person name="Langland J.O."/>
            <person name="Jacobs B.L."/>
        </authorList>
    </citation>
    <scope>FUNCTION</scope>
</reference>
<feature type="chain" id="PRO_0000099447" description="RNA-binding protein OPG065">
    <location>
        <begin position="1"/>
        <end position="190"/>
    </location>
</feature>
<feature type="domain" description="Z-binding" evidence="2">
    <location>
        <begin position="5"/>
        <end position="70"/>
    </location>
</feature>
<feature type="domain" description="DRBM" evidence="3">
    <location>
        <begin position="117"/>
        <end position="184"/>
    </location>
</feature>
<feature type="splice variant" id="VSP_018956" description="In isoform Short." evidence="6">
    <location>
        <begin position="1"/>
        <end position="37"/>
    </location>
</feature>
<accession>P21081</accession>
<sequence length="190" mass="21504">MSKIYIDERSDAEIVCAAIKNIGIEGATAAQLTRQLNMEKREVNKALYDLQRSAMVYSSDDIPPRWFMTTEADKPDADAMADVIIDDVSREKSMREDHKSFDDVIPAKKIIDWKDANPVTIINEYCQITKRDWSFRIESVGPSNSPTFYACVDIDGRVFDKADGKSKRDAKNNAAKLAVDKLLGYVIIRF</sequence>
<organismHost>
    <name type="scientific">Homo sapiens</name>
    <name type="common">Human</name>
    <dbReference type="NCBI Taxonomy" id="9606"/>
</organismHost>
<keyword id="KW-0024">Alternative initiation</keyword>
<keyword id="KW-0945">Host-virus interaction</keyword>
<keyword id="KW-1090">Inhibition of host innate immune response by virus</keyword>
<keyword id="KW-1114">Inhibition of host interferon signaling pathway by virus</keyword>
<keyword id="KW-1092">Inhibition of host IRF3 by virus</keyword>
<keyword id="KW-1093">Inhibition of host IRF7 by virus</keyword>
<keyword id="KW-1095">Inhibition of host ISG15 by virus</keyword>
<keyword id="KW-1102">Inhibition of host PKR by virus</keyword>
<keyword id="KW-1113">Inhibition of host RLR pathway by virus</keyword>
<keyword id="KW-0922">Interferon antiviral system evasion</keyword>
<keyword id="KW-1119">Modulation of host cell apoptosis by virus</keyword>
<keyword id="KW-1185">Reference proteome</keyword>
<keyword id="KW-0694">RNA-binding</keyword>
<keyword id="KW-0899">Viral immunoevasion</keyword>
<name>PG065_VACCC</name>
<dbReference type="EMBL" id="M35027">
    <property type="protein sequence ID" value="AAA48040.1"/>
    <property type="molecule type" value="Genomic_DNA"/>
</dbReference>
<dbReference type="PIR" id="G42508">
    <property type="entry name" value="G42508"/>
</dbReference>
<dbReference type="SMR" id="P21081"/>
<dbReference type="Proteomes" id="UP000008269">
    <property type="component" value="Segment"/>
</dbReference>
<dbReference type="GO" id="GO:0003726">
    <property type="term" value="F:double-stranded RNA adenosine deaminase activity"/>
    <property type="evidence" value="ECO:0007669"/>
    <property type="project" value="InterPro"/>
</dbReference>
<dbReference type="GO" id="GO:0003725">
    <property type="term" value="F:double-stranded RNA binding"/>
    <property type="evidence" value="ECO:0000250"/>
    <property type="project" value="UniProtKB"/>
</dbReference>
<dbReference type="GO" id="GO:0030291">
    <property type="term" value="F:protein serine/threonine kinase inhibitor activity"/>
    <property type="evidence" value="ECO:0007669"/>
    <property type="project" value="UniProtKB-KW"/>
</dbReference>
<dbReference type="GO" id="GO:0033668">
    <property type="term" value="P:symbiont-mediated suppression of host apoptosis"/>
    <property type="evidence" value="ECO:0000250"/>
    <property type="project" value="UniProtKB"/>
</dbReference>
<dbReference type="GO" id="GO:0039548">
    <property type="term" value="P:symbiont-mediated suppression of host cytoplasmic pattern recognition receptor signaling pathway via inhibition of IRF3 activity"/>
    <property type="evidence" value="ECO:0007669"/>
    <property type="project" value="UniProtKB-KW"/>
</dbReference>
<dbReference type="GO" id="GO:0039557">
    <property type="term" value="P:symbiont-mediated suppression of host cytoplasmic pattern recognition receptor signaling pathway via inhibition of IRF7 activity"/>
    <property type="evidence" value="ECO:0007669"/>
    <property type="project" value="UniProtKB-KW"/>
</dbReference>
<dbReference type="GO" id="GO:0039579">
    <property type="term" value="P:symbiont-mediated suppression of host ISG15-protein conjugation"/>
    <property type="evidence" value="ECO:0007669"/>
    <property type="project" value="UniProtKB-KW"/>
</dbReference>
<dbReference type="GO" id="GO:0039580">
    <property type="term" value="P:symbiont-mediated suppression of host PKR/eIFalpha signaling"/>
    <property type="evidence" value="ECO:0007669"/>
    <property type="project" value="UniProtKB-KW"/>
</dbReference>
<dbReference type="GO" id="GO:0039502">
    <property type="term" value="P:symbiont-mediated suppression of host type I interferon-mediated signaling pathway"/>
    <property type="evidence" value="ECO:0000250"/>
    <property type="project" value="UniProtKB"/>
</dbReference>
<dbReference type="CDD" id="cd19875">
    <property type="entry name" value="DSRM_EIF2AK2-like"/>
    <property type="match status" value="1"/>
</dbReference>
<dbReference type="FunFam" id="3.30.160.20:FF:000108">
    <property type="entry name" value="Double-stranded RNA-binding protein"/>
    <property type="match status" value="1"/>
</dbReference>
<dbReference type="Gene3D" id="3.30.160.20">
    <property type="match status" value="1"/>
</dbReference>
<dbReference type="Gene3D" id="1.10.10.10">
    <property type="entry name" value="Winged helix-like DNA-binding domain superfamily/Winged helix DNA-binding domain"/>
    <property type="match status" value="1"/>
</dbReference>
<dbReference type="InterPro" id="IPR014720">
    <property type="entry name" value="dsRBD_dom"/>
</dbReference>
<dbReference type="InterPro" id="IPR009179">
    <property type="entry name" value="E3L"/>
</dbReference>
<dbReference type="InterPro" id="IPR036388">
    <property type="entry name" value="WH-like_DNA-bd_sf"/>
</dbReference>
<dbReference type="InterPro" id="IPR036390">
    <property type="entry name" value="WH_DNA-bd_sf"/>
</dbReference>
<dbReference type="InterPro" id="IPR042371">
    <property type="entry name" value="Z_dom"/>
</dbReference>
<dbReference type="Pfam" id="PF00035">
    <property type="entry name" value="dsrm"/>
    <property type="match status" value="1"/>
</dbReference>
<dbReference type="Pfam" id="PF02295">
    <property type="entry name" value="z-alpha"/>
    <property type="match status" value="1"/>
</dbReference>
<dbReference type="PIRSF" id="PIRSF004008">
    <property type="entry name" value="VAC_E3L"/>
    <property type="match status" value="1"/>
</dbReference>
<dbReference type="SMART" id="SM00358">
    <property type="entry name" value="DSRM"/>
    <property type="match status" value="1"/>
</dbReference>
<dbReference type="SMART" id="SM00550">
    <property type="entry name" value="Zalpha"/>
    <property type="match status" value="1"/>
</dbReference>
<dbReference type="SUPFAM" id="SSF54768">
    <property type="entry name" value="dsRNA-binding domain-like"/>
    <property type="match status" value="1"/>
</dbReference>
<dbReference type="SUPFAM" id="SSF46785">
    <property type="entry name" value="Winged helix' DNA-binding domain"/>
    <property type="match status" value="1"/>
</dbReference>
<dbReference type="PROSITE" id="PS50137">
    <property type="entry name" value="DS_RBD"/>
    <property type="match status" value="1"/>
</dbReference>
<dbReference type="PROSITE" id="PS50139">
    <property type="entry name" value="Z_BINDING"/>
    <property type="match status" value="1"/>
</dbReference>
<evidence type="ECO:0000250" key="1">
    <source>
        <dbReference type="UniProtKB" id="P21605"/>
    </source>
</evidence>
<evidence type="ECO:0000255" key="2">
    <source>
        <dbReference type="PROSITE-ProRule" id="PRU00073"/>
    </source>
</evidence>
<evidence type="ECO:0000255" key="3">
    <source>
        <dbReference type="PROSITE-ProRule" id="PRU00266"/>
    </source>
</evidence>
<evidence type="ECO:0000269" key="4">
    <source>
    </source>
</evidence>
<evidence type="ECO:0000303" key="5">
    <source>
    </source>
</evidence>
<evidence type="ECO:0000305" key="6"/>
<protein>
    <recommendedName>
        <fullName>RNA-binding protein OPG065</fullName>
    </recommendedName>
    <alternativeName>
        <fullName evidence="6">RNA-binding protein E3</fullName>
    </alternativeName>
    <alternativeName>
        <fullName evidence="1">p25</fullName>
    </alternativeName>
</protein>
<proteinExistence type="evidence at transcript level"/>
<gene>
    <name type="primary">OPG065</name>
    <name evidence="5" type="ORF">E3L</name>
</gene>
<organism>
    <name type="scientific">Vaccinia virus (strain Copenhagen)</name>
    <name type="common">VACV</name>
    <dbReference type="NCBI Taxonomy" id="10249"/>
    <lineage>
        <taxon>Viruses</taxon>
        <taxon>Varidnaviria</taxon>
        <taxon>Bamfordvirae</taxon>
        <taxon>Nucleocytoviricota</taxon>
        <taxon>Pokkesviricetes</taxon>
        <taxon>Chitovirales</taxon>
        <taxon>Poxviridae</taxon>
        <taxon>Chordopoxvirinae</taxon>
        <taxon>Orthopoxvirus</taxon>
        <taxon>Vaccinia virus</taxon>
    </lineage>
</organism>